<feature type="chain" id="PRO_1000134594" description="TDP-N-acetylfucosamine:lipid II N-acetylfucosaminyltransferase">
    <location>
        <begin position="1"/>
        <end position="359"/>
    </location>
</feature>
<evidence type="ECO:0000255" key="1">
    <source>
        <dbReference type="HAMAP-Rule" id="MF_01002"/>
    </source>
</evidence>
<accession>B7MH57</accession>
<protein>
    <recommendedName>
        <fullName evidence="1">TDP-N-acetylfucosamine:lipid II N-acetylfucosaminyltransferase</fullName>
        <ecNumber evidence="1">2.4.1.325</ecNumber>
    </recommendedName>
    <alternativeName>
        <fullName evidence="1">4-alpha-L-fucosyltransferase</fullName>
    </alternativeName>
    <alternativeName>
        <fullName evidence="1">TDP-Fuc4NAc:lipid II Fuc4NAc transferase</fullName>
        <shortName evidence="1">Fuc4NAc transferase</shortName>
    </alternativeName>
</protein>
<comment type="function">
    <text evidence="1">Catalyzes the synthesis of Und-PP-GlcNAc-ManNAcA-Fuc4NAc (Lipid III), the third lipid-linked intermediate involved in ECA synthesis.</text>
</comment>
<comment type="catalytic activity">
    <reaction evidence="1">
        <text>beta-D-ManNAcA-(1-&gt;4)-alpha-D-GlcNAc-di-trans,octa-cis-undecaprenyl diphosphate + dTDP-4-acetamido-4,6-dideoxy-alpha-D-galactose = alpha-D-FucNAc4-(1-&gt;4)-beta-D-ManNAcA-(1-&gt;4)-D-GlcNAc-undecaprenyl diphosphate + dTDP + H(+)</text>
        <dbReference type="Rhea" id="RHEA:28759"/>
        <dbReference type="ChEBI" id="CHEBI:15378"/>
        <dbReference type="ChEBI" id="CHEBI:58369"/>
        <dbReference type="ChEBI" id="CHEBI:61495"/>
        <dbReference type="ChEBI" id="CHEBI:61496"/>
        <dbReference type="ChEBI" id="CHEBI:68493"/>
        <dbReference type="EC" id="2.4.1.325"/>
    </reaction>
</comment>
<comment type="pathway">
    <text evidence="1">Bacterial outer membrane biogenesis; enterobacterial common antigen biosynthesis.</text>
</comment>
<comment type="subcellular location">
    <subcellularLocation>
        <location evidence="1">Cell inner membrane</location>
        <topology evidence="1">Peripheral membrane protein</topology>
    </subcellularLocation>
</comment>
<comment type="similarity">
    <text evidence="1">Belongs to the glycosyltransferase 56 family.</text>
</comment>
<dbReference type="EC" id="2.4.1.325" evidence="1"/>
<dbReference type="EMBL" id="CU928161">
    <property type="protein sequence ID" value="CAR05411.1"/>
    <property type="molecule type" value="Genomic_DNA"/>
</dbReference>
<dbReference type="RefSeq" id="WP_000217276.1">
    <property type="nucleotide sequence ID" value="NC_011742.1"/>
</dbReference>
<dbReference type="SMR" id="B7MH57"/>
<dbReference type="CAZy" id="GT56">
    <property type="family name" value="Glycosyltransferase Family 56"/>
</dbReference>
<dbReference type="KEGG" id="ecz:ECS88_4215"/>
<dbReference type="HOGENOM" id="CLU_066584_0_0_6"/>
<dbReference type="UniPathway" id="UPA00566"/>
<dbReference type="Proteomes" id="UP000000747">
    <property type="component" value="Chromosome"/>
</dbReference>
<dbReference type="GO" id="GO:0005886">
    <property type="term" value="C:plasma membrane"/>
    <property type="evidence" value="ECO:0007669"/>
    <property type="project" value="UniProtKB-SubCell"/>
</dbReference>
<dbReference type="GO" id="GO:0102031">
    <property type="term" value="F:4-acetamido-4,6-dideoxy-D-galactose transferase activity"/>
    <property type="evidence" value="ECO:0007669"/>
    <property type="project" value="UniProtKB-EC"/>
</dbReference>
<dbReference type="GO" id="GO:0008417">
    <property type="term" value="F:fucosyltransferase activity"/>
    <property type="evidence" value="ECO:0007669"/>
    <property type="project" value="InterPro"/>
</dbReference>
<dbReference type="GO" id="GO:0009246">
    <property type="term" value="P:enterobacterial common antigen biosynthetic process"/>
    <property type="evidence" value="ECO:0007669"/>
    <property type="project" value="UniProtKB-UniRule"/>
</dbReference>
<dbReference type="GO" id="GO:0036065">
    <property type="term" value="P:fucosylation"/>
    <property type="evidence" value="ECO:0007669"/>
    <property type="project" value="InterPro"/>
</dbReference>
<dbReference type="HAMAP" id="MF_01002">
    <property type="entry name" value="WecF_RffT"/>
    <property type="match status" value="1"/>
</dbReference>
<dbReference type="InterPro" id="IPR009993">
    <property type="entry name" value="WecF"/>
</dbReference>
<dbReference type="NCBIfam" id="NF002752">
    <property type="entry name" value="PRK02797.1-1"/>
    <property type="match status" value="1"/>
</dbReference>
<dbReference type="NCBIfam" id="NF002753">
    <property type="entry name" value="PRK02797.1-2"/>
    <property type="match status" value="1"/>
</dbReference>
<dbReference type="NCBIfam" id="NF002754">
    <property type="entry name" value="PRK02797.1-3"/>
    <property type="match status" value="1"/>
</dbReference>
<dbReference type="Pfam" id="PF07429">
    <property type="entry name" value="Glyco_transf_56"/>
    <property type="match status" value="1"/>
</dbReference>
<organism>
    <name type="scientific">Escherichia coli O45:K1 (strain S88 / ExPEC)</name>
    <dbReference type="NCBI Taxonomy" id="585035"/>
    <lineage>
        <taxon>Bacteria</taxon>
        <taxon>Pseudomonadati</taxon>
        <taxon>Pseudomonadota</taxon>
        <taxon>Gammaproteobacteria</taxon>
        <taxon>Enterobacterales</taxon>
        <taxon>Enterobacteriaceae</taxon>
        <taxon>Escherichia</taxon>
    </lineage>
</organism>
<name>WECF_ECO45</name>
<sequence>MTVLIHVLGSDIPHHNRTVLRFFNDALAATSGHAREFMVAGKDDGLSDSCPALSVQFFPGKKSLAEAVIAKAKANRQQRFFFHGQFNPKLWLALLSGGIKPSQFFWHIWGADLYELSSGLRYKLFYPLRRLAQKRVGCVFATRGDLSFFAKTHPKVRGELLYFPTRMDPSLNTMANDRQREGKMTILVGNSGDRSNEHIAALRAVHQQFGDTVKVVVPMGYPPNNEAYIEEVRQAGLELFSEENLQVLSEKLEFDAYLTLLRQCDLGYFIFARQQGIGTLCLLIQAGIPCVLNRENPFWQDMTEQHLPVLFTTDDLNEDIVREAQRQLASVDKNTIAFFSPNYLQGWQRALAIAAGEVA</sequence>
<keyword id="KW-0997">Cell inner membrane</keyword>
<keyword id="KW-1003">Cell membrane</keyword>
<keyword id="KW-0328">Glycosyltransferase</keyword>
<keyword id="KW-0472">Membrane</keyword>
<keyword id="KW-1185">Reference proteome</keyword>
<keyword id="KW-0808">Transferase</keyword>
<gene>
    <name evidence="1" type="primary">wecF</name>
    <name evidence="1" type="synonym">rffT</name>
    <name type="ordered locus">ECS88_4215</name>
</gene>
<proteinExistence type="inferred from homology"/>
<reference key="1">
    <citation type="journal article" date="2009" name="PLoS Genet.">
        <title>Organised genome dynamics in the Escherichia coli species results in highly diverse adaptive paths.</title>
        <authorList>
            <person name="Touchon M."/>
            <person name="Hoede C."/>
            <person name="Tenaillon O."/>
            <person name="Barbe V."/>
            <person name="Baeriswyl S."/>
            <person name="Bidet P."/>
            <person name="Bingen E."/>
            <person name="Bonacorsi S."/>
            <person name="Bouchier C."/>
            <person name="Bouvet O."/>
            <person name="Calteau A."/>
            <person name="Chiapello H."/>
            <person name="Clermont O."/>
            <person name="Cruveiller S."/>
            <person name="Danchin A."/>
            <person name="Diard M."/>
            <person name="Dossat C."/>
            <person name="Karoui M.E."/>
            <person name="Frapy E."/>
            <person name="Garry L."/>
            <person name="Ghigo J.M."/>
            <person name="Gilles A.M."/>
            <person name="Johnson J."/>
            <person name="Le Bouguenec C."/>
            <person name="Lescat M."/>
            <person name="Mangenot S."/>
            <person name="Martinez-Jehanne V."/>
            <person name="Matic I."/>
            <person name="Nassif X."/>
            <person name="Oztas S."/>
            <person name="Petit M.A."/>
            <person name="Pichon C."/>
            <person name="Rouy Z."/>
            <person name="Ruf C.S."/>
            <person name="Schneider D."/>
            <person name="Tourret J."/>
            <person name="Vacherie B."/>
            <person name="Vallenet D."/>
            <person name="Medigue C."/>
            <person name="Rocha E.P.C."/>
            <person name="Denamur E."/>
        </authorList>
    </citation>
    <scope>NUCLEOTIDE SEQUENCE [LARGE SCALE GENOMIC DNA]</scope>
    <source>
        <strain>S88 / ExPEC</strain>
    </source>
</reference>